<accession>Q8DEV7</accession>
<keyword id="KW-0963">Cytoplasm</keyword>
<keyword id="KW-0233">DNA recombination</keyword>
<proteinExistence type="inferred from homology"/>
<dbReference type="EMBL" id="AE016795">
    <property type="protein sequence ID" value="AAO08991.2"/>
    <property type="molecule type" value="Genomic_DNA"/>
</dbReference>
<dbReference type="RefSeq" id="WP_011078567.1">
    <property type="nucleotide sequence ID" value="NC_004459.3"/>
</dbReference>
<dbReference type="SMR" id="Q8DEV7"/>
<dbReference type="KEGG" id="vvu:VV1_0469"/>
<dbReference type="HOGENOM" id="CLU_052038_1_1_6"/>
<dbReference type="Proteomes" id="UP000002275">
    <property type="component" value="Chromosome 1"/>
</dbReference>
<dbReference type="GO" id="GO:0043590">
    <property type="term" value="C:bacterial nucleoid"/>
    <property type="evidence" value="ECO:0007669"/>
    <property type="project" value="TreeGrafter"/>
</dbReference>
<dbReference type="GO" id="GO:0005737">
    <property type="term" value="C:cytoplasm"/>
    <property type="evidence" value="ECO:0007669"/>
    <property type="project" value="UniProtKB-UniRule"/>
</dbReference>
<dbReference type="GO" id="GO:0003690">
    <property type="term" value="F:double-stranded DNA binding"/>
    <property type="evidence" value="ECO:0007669"/>
    <property type="project" value="TreeGrafter"/>
</dbReference>
<dbReference type="GO" id="GO:0006310">
    <property type="term" value="P:DNA recombination"/>
    <property type="evidence" value="ECO:0007669"/>
    <property type="project" value="UniProtKB-UniRule"/>
</dbReference>
<dbReference type="GO" id="GO:0000018">
    <property type="term" value="P:regulation of DNA recombination"/>
    <property type="evidence" value="ECO:0007669"/>
    <property type="project" value="TreeGrafter"/>
</dbReference>
<dbReference type="HAMAP" id="MF_00194">
    <property type="entry name" value="RdgC"/>
    <property type="match status" value="1"/>
</dbReference>
<dbReference type="InterPro" id="IPR007476">
    <property type="entry name" value="RdgC"/>
</dbReference>
<dbReference type="NCBIfam" id="NF001462">
    <property type="entry name" value="PRK00321.1-3"/>
    <property type="match status" value="1"/>
</dbReference>
<dbReference type="NCBIfam" id="NF001464">
    <property type="entry name" value="PRK00321.1-5"/>
    <property type="match status" value="1"/>
</dbReference>
<dbReference type="PANTHER" id="PTHR38103">
    <property type="entry name" value="RECOMBINATION-ASSOCIATED PROTEIN RDGC"/>
    <property type="match status" value="1"/>
</dbReference>
<dbReference type="PANTHER" id="PTHR38103:SF1">
    <property type="entry name" value="RECOMBINATION-ASSOCIATED PROTEIN RDGC"/>
    <property type="match status" value="1"/>
</dbReference>
<dbReference type="Pfam" id="PF04381">
    <property type="entry name" value="RdgC"/>
    <property type="match status" value="1"/>
</dbReference>
<name>RDGC_VIBVU</name>
<evidence type="ECO:0000255" key="1">
    <source>
        <dbReference type="HAMAP-Rule" id="MF_00194"/>
    </source>
</evidence>
<protein>
    <recommendedName>
        <fullName evidence="1">Recombination-associated protein RdgC</fullName>
    </recommendedName>
</protein>
<comment type="function">
    <text evidence="1">May be involved in recombination.</text>
</comment>
<comment type="subcellular location">
    <subcellularLocation>
        <location evidence="1">Cytoplasm</location>
        <location evidence="1">Nucleoid</location>
    </subcellularLocation>
</comment>
<comment type="similarity">
    <text evidence="1">Belongs to the RdgC family.</text>
</comment>
<reference key="1">
    <citation type="submission" date="2002-12" db="EMBL/GenBank/DDBJ databases">
        <title>Complete genome sequence of Vibrio vulnificus CMCP6.</title>
        <authorList>
            <person name="Rhee J.H."/>
            <person name="Kim S.Y."/>
            <person name="Chung S.S."/>
            <person name="Kim J.J."/>
            <person name="Moon Y.H."/>
            <person name="Jeong H."/>
            <person name="Choy H.E."/>
        </authorList>
    </citation>
    <scope>NUCLEOTIDE SEQUENCE [LARGE SCALE GENOMIC DNA]</scope>
    <source>
        <strain>CMCP6</strain>
    </source>
</reference>
<organism>
    <name type="scientific">Vibrio vulnificus (strain CMCP6)</name>
    <dbReference type="NCBI Taxonomy" id="216895"/>
    <lineage>
        <taxon>Bacteria</taxon>
        <taxon>Pseudomonadati</taxon>
        <taxon>Pseudomonadota</taxon>
        <taxon>Gammaproteobacteria</taxon>
        <taxon>Vibrionales</taxon>
        <taxon>Vibrionaceae</taxon>
        <taxon>Vibrio</taxon>
    </lineage>
</organism>
<gene>
    <name evidence="1" type="primary">rdgC</name>
    <name type="ordered locus">VV1_0469</name>
</gene>
<sequence>MWFKNCMVYRVNREIEFNADQLEKQLAEFRYTPCGSQDKQKFGWVSAMGRHGDMMTHVSEDRILICAKKEEKMLPASVIKESLNAKVEAMEAQEGRPLKKKEKETLKEEIIIDLLPRAFSRSNHTYVLILPKEGFILVDASSYKKAEDVLALLRKTMGSLPVVPAIPEKAVETTLTEWVKTGQTPQGFHLLDEAELKSVLEDGGIIRCKKQELTSDEILSHIAADKVVTKLALNWQERLEFVLADDASIKRLKFSDELRDQNDDIPREDQAARFDADFSLMCGELSAFLPNLFQALGGLPHPNA</sequence>
<feature type="chain" id="PRO_0000211754" description="Recombination-associated protein RdgC">
    <location>
        <begin position="1"/>
        <end position="304"/>
    </location>
</feature>